<reference key="1">
    <citation type="journal article" date="2006" name="Proc. Natl. Acad. Sci. U.S.A.">
        <title>Molecular genetic anatomy of inter- and intraserotype variation in the human bacterial pathogen group A Streptococcus.</title>
        <authorList>
            <person name="Beres S.B."/>
            <person name="Richter E.W."/>
            <person name="Nagiec M.J."/>
            <person name="Sumby P."/>
            <person name="Porcella S.F."/>
            <person name="DeLeo F.R."/>
            <person name="Musser J.M."/>
        </authorList>
    </citation>
    <scope>NUCLEOTIDE SEQUENCE [LARGE SCALE GENOMIC DNA]</scope>
    <source>
        <strain>MGAS10270</strain>
    </source>
</reference>
<organism>
    <name type="scientific">Streptococcus pyogenes serotype M2 (strain MGAS10270)</name>
    <dbReference type="NCBI Taxonomy" id="370552"/>
    <lineage>
        <taxon>Bacteria</taxon>
        <taxon>Bacillati</taxon>
        <taxon>Bacillota</taxon>
        <taxon>Bacilli</taxon>
        <taxon>Lactobacillales</taxon>
        <taxon>Streptococcaceae</taxon>
        <taxon>Streptococcus</taxon>
    </lineage>
</organism>
<feature type="chain" id="PRO_0000255538" description="Small ribosomal subunit protein uS15">
    <location>
        <begin position="1"/>
        <end position="89"/>
    </location>
</feature>
<proteinExistence type="inferred from homology"/>
<accession>Q1JEW0</accession>
<keyword id="KW-0687">Ribonucleoprotein</keyword>
<keyword id="KW-0689">Ribosomal protein</keyword>
<keyword id="KW-0694">RNA-binding</keyword>
<keyword id="KW-0699">rRNA-binding</keyword>
<comment type="function">
    <text evidence="1">One of the primary rRNA binding proteins, it binds directly to 16S rRNA where it helps nucleate assembly of the platform of the 30S subunit by binding and bridging several RNA helices of the 16S rRNA.</text>
</comment>
<comment type="function">
    <text evidence="1">Forms an intersubunit bridge (bridge B4) with the 23S rRNA of the 50S subunit in the ribosome.</text>
</comment>
<comment type="subunit">
    <text evidence="1">Part of the 30S ribosomal subunit. Forms a bridge to the 50S subunit in the 70S ribosome, contacting the 23S rRNA.</text>
</comment>
<comment type="similarity">
    <text evidence="1">Belongs to the universal ribosomal protein uS15 family.</text>
</comment>
<dbReference type="EMBL" id="CP000260">
    <property type="protein sequence ID" value="ABF34799.1"/>
    <property type="molecule type" value="Genomic_DNA"/>
</dbReference>
<dbReference type="SMR" id="Q1JEW0"/>
<dbReference type="KEGG" id="sph:MGAS10270_Spy1734"/>
<dbReference type="HOGENOM" id="CLU_148518_0_0_9"/>
<dbReference type="Proteomes" id="UP000002436">
    <property type="component" value="Chromosome"/>
</dbReference>
<dbReference type="GO" id="GO:0022627">
    <property type="term" value="C:cytosolic small ribosomal subunit"/>
    <property type="evidence" value="ECO:0007669"/>
    <property type="project" value="TreeGrafter"/>
</dbReference>
<dbReference type="GO" id="GO:0019843">
    <property type="term" value="F:rRNA binding"/>
    <property type="evidence" value="ECO:0007669"/>
    <property type="project" value="UniProtKB-UniRule"/>
</dbReference>
<dbReference type="GO" id="GO:0003735">
    <property type="term" value="F:structural constituent of ribosome"/>
    <property type="evidence" value="ECO:0007669"/>
    <property type="project" value="InterPro"/>
</dbReference>
<dbReference type="GO" id="GO:0006412">
    <property type="term" value="P:translation"/>
    <property type="evidence" value="ECO:0007669"/>
    <property type="project" value="UniProtKB-UniRule"/>
</dbReference>
<dbReference type="CDD" id="cd00353">
    <property type="entry name" value="Ribosomal_S15p_S13e"/>
    <property type="match status" value="1"/>
</dbReference>
<dbReference type="FunFam" id="1.10.287.10:FF:000002">
    <property type="entry name" value="30S ribosomal protein S15"/>
    <property type="match status" value="1"/>
</dbReference>
<dbReference type="Gene3D" id="6.10.250.3130">
    <property type="match status" value="1"/>
</dbReference>
<dbReference type="Gene3D" id="1.10.287.10">
    <property type="entry name" value="S15/NS1, RNA-binding"/>
    <property type="match status" value="1"/>
</dbReference>
<dbReference type="HAMAP" id="MF_01343_B">
    <property type="entry name" value="Ribosomal_uS15_B"/>
    <property type="match status" value="1"/>
</dbReference>
<dbReference type="InterPro" id="IPR000589">
    <property type="entry name" value="Ribosomal_uS15"/>
</dbReference>
<dbReference type="InterPro" id="IPR005290">
    <property type="entry name" value="Ribosomal_uS15_bac-type"/>
</dbReference>
<dbReference type="InterPro" id="IPR009068">
    <property type="entry name" value="uS15_NS1_RNA-bd_sf"/>
</dbReference>
<dbReference type="NCBIfam" id="TIGR00952">
    <property type="entry name" value="S15_bact"/>
    <property type="match status" value="1"/>
</dbReference>
<dbReference type="PANTHER" id="PTHR23321">
    <property type="entry name" value="RIBOSOMAL PROTEIN S15, BACTERIAL AND ORGANELLAR"/>
    <property type="match status" value="1"/>
</dbReference>
<dbReference type="PANTHER" id="PTHR23321:SF26">
    <property type="entry name" value="SMALL RIBOSOMAL SUBUNIT PROTEIN US15M"/>
    <property type="match status" value="1"/>
</dbReference>
<dbReference type="Pfam" id="PF00312">
    <property type="entry name" value="Ribosomal_S15"/>
    <property type="match status" value="1"/>
</dbReference>
<dbReference type="SMART" id="SM01387">
    <property type="entry name" value="Ribosomal_S15"/>
    <property type="match status" value="1"/>
</dbReference>
<dbReference type="SUPFAM" id="SSF47060">
    <property type="entry name" value="S15/NS1 RNA-binding domain"/>
    <property type="match status" value="1"/>
</dbReference>
<dbReference type="PROSITE" id="PS00362">
    <property type="entry name" value="RIBOSOMAL_S15"/>
    <property type="match status" value="1"/>
</dbReference>
<protein>
    <recommendedName>
        <fullName evidence="1">Small ribosomal subunit protein uS15</fullName>
    </recommendedName>
    <alternativeName>
        <fullName evidence="2">30S ribosomal protein S15</fullName>
    </alternativeName>
</protein>
<gene>
    <name evidence="1" type="primary">rpsO</name>
    <name type="ordered locus">MGAS10270_Spy1734</name>
</gene>
<sequence>MAISKEKKNEIIAQYARHEGDTGSVEVQVAVLTWEINHLNSHIKEHKKDHATYRGLMKKIGHRRNLLAYLRRTDVNRYRELIQSLGLRR</sequence>
<name>RS15_STRPD</name>
<evidence type="ECO:0000255" key="1">
    <source>
        <dbReference type="HAMAP-Rule" id="MF_01343"/>
    </source>
</evidence>
<evidence type="ECO:0000305" key="2"/>